<dbReference type="EMBL" id="BX950229">
    <property type="protein sequence ID" value="CAF29649.1"/>
    <property type="molecule type" value="Genomic_DNA"/>
</dbReference>
<dbReference type="RefSeq" id="WP_011170037.1">
    <property type="nucleotide sequence ID" value="NC_005791.1"/>
</dbReference>
<dbReference type="SMR" id="Q6M125"/>
<dbReference type="STRING" id="267377.MMP0093"/>
<dbReference type="EnsemblBacteria" id="CAF29649">
    <property type="protein sequence ID" value="CAF29649"/>
    <property type="gene ID" value="MMP0093"/>
</dbReference>
<dbReference type="KEGG" id="mmp:MMP0093"/>
<dbReference type="PATRIC" id="fig|267377.15.peg.94"/>
<dbReference type="eggNOG" id="arCOG04129">
    <property type="taxonomic scope" value="Archaea"/>
</dbReference>
<dbReference type="HOGENOM" id="CLU_103610_1_1_2"/>
<dbReference type="OrthoDB" id="6295at2157"/>
<dbReference type="Proteomes" id="UP000000590">
    <property type="component" value="Chromosome"/>
</dbReference>
<dbReference type="GO" id="GO:1990904">
    <property type="term" value="C:ribonucleoprotein complex"/>
    <property type="evidence" value="ECO:0007669"/>
    <property type="project" value="UniProtKB-KW"/>
</dbReference>
<dbReference type="GO" id="GO:0005840">
    <property type="term" value="C:ribosome"/>
    <property type="evidence" value="ECO:0007669"/>
    <property type="project" value="UniProtKB-KW"/>
</dbReference>
<dbReference type="GO" id="GO:0003735">
    <property type="term" value="F:structural constituent of ribosome"/>
    <property type="evidence" value="ECO:0007669"/>
    <property type="project" value="InterPro"/>
</dbReference>
<dbReference type="GO" id="GO:0006412">
    <property type="term" value="P:translation"/>
    <property type="evidence" value="ECO:0007669"/>
    <property type="project" value="UniProtKB-UniRule"/>
</dbReference>
<dbReference type="FunFam" id="2.30.30.70:FF:000001">
    <property type="entry name" value="60S ribosomal protein L21"/>
    <property type="match status" value="1"/>
</dbReference>
<dbReference type="Gene3D" id="2.30.30.70">
    <property type="entry name" value="Ribosomal protein L21"/>
    <property type="match status" value="1"/>
</dbReference>
<dbReference type="HAMAP" id="MF_00369">
    <property type="entry name" value="Ribosomal_eL21"/>
    <property type="match status" value="1"/>
</dbReference>
<dbReference type="InterPro" id="IPR001147">
    <property type="entry name" value="Ribosomal_eL21"/>
</dbReference>
<dbReference type="InterPro" id="IPR022856">
    <property type="entry name" value="Ribosomal_eL21_arc"/>
</dbReference>
<dbReference type="InterPro" id="IPR018259">
    <property type="entry name" value="Ribosomal_eL21_CS"/>
</dbReference>
<dbReference type="InterPro" id="IPR036948">
    <property type="entry name" value="Ribosomal_eL21_sf"/>
</dbReference>
<dbReference type="InterPro" id="IPR008991">
    <property type="entry name" value="Translation_prot_SH3-like_sf"/>
</dbReference>
<dbReference type="NCBIfam" id="NF003303">
    <property type="entry name" value="PRK04306.1"/>
    <property type="match status" value="1"/>
</dbReference>
<dbReference type="PANTHER" id="PTHR20981">
    <property type="entry name" value="60S RIBOSOMAL PROTEIN L21"/>
    <property type="match status" value="1"/>
</dbReference>
<dbReference type="Pfam" id="PF01157">
    <property type="entry name" value="Ribosomal_L21e"/>
    <property type="match status" value="1"/>
</dbReference>
<dbReference type="SUPFAM" id="SSF50104">
    <property type="entry name" value="Translation proteins SH3-like domain"/>
    <property type="match status" value="1"/>
</dbReference>
<dbReference type="PROSITE" id="PS01171">
    <property type="entry name" value="RIBOSOMAL_L21E"/>
    <property type="match status" value="1"/>
</dbReference>
<reference key="1">
    <citation type="journal article" date="2004" name="J. Bacteriol.">
        <title>Complete genome sequence of the genetically tractable hydrogenotrophic methanogen Methanococcus maripaludis.</title>
        <authorList>
            <person name="Hendrickson E.L."/>
            <person name="Kaul R."/>
            <person name="Zhou Y."/>
            <person name="Bovee D."/>
            <person name="Chapman P."/>
            <person name="Chung J."/>
            <person name="Conway de Macario E."/>
            <person name="Dodsworth J.A."/>
            <person name="Gillett W."/>
            <person name="Graham D.E."/>
            <person name="Hackett M."/>
            <person name="Haydock A.K."/>
            <person name="Kang A."/>
            <person name="Land M.L."/>
            <person name="Levy R."/>
            <person name="Lie T.J."/>
            <person name="Major T.A."/>
            <person name="Moore B.C."/>
            <person name="Porat I."/>
            <person name="Palmeiri A."/>
            <person name="Rouse G."/>
            <person name="Saenphimmachak C."/>
            <person name="Soell D."/>
            <person name="Van Dien S."/>
            <person name="Wang T."/>
            <person name="Whitman W.B."/>
            <person name="Xia Q."/>
            <person name="Zhang Y."/>
            <person name="Larimer F.W."/>
            <person name="Olson M.V."/>
            <person name="Leigh J.A."/>
        </authorList>
    </citation>
    <scope>NUCLEOTIDE SEQUENCE [LARGE SCALE GENOMIC DNA]</scope>
    <source>
        <strain>DSM 14266 / JCM 13030 / NBRC 101832 / S2 / LL</strain>
    </source>
</reference>
<gene>
    <name evidence="1" type="primary">rpl21e</name>
    <name type="ordered locus">MMP0093</name>
</gene>
<proteinExistence type="inferred from homology"/>
<feature type="chain" id="PRO_0000149692" description="Large ribosomal subunit protein eL21">
    <location>
        <begin position="1"/>
        <end position="97"/>
    </location>
</feature>
<feature type="region of interest" description="Disordered" evidence="2">
    <location>
        <begin position="1"/>
        <end position="24"/>
    </location>
</feature>
<feature type="compositionally biased region" description="Basic residues" evidence="2">
    <location>
        <begin position="9"/>
        <end position="21"/>
    </location>
</feature>
<sequence>MQKSEGFRSKTRYKLQKHPRQKGMAPLTRALKCYTEGDLVHVVLDPSVQKGMPHPKFHGKTGVVVAQRGSSFLVRVKDGGKYKDIIARPQHLRESKL</sequence>
<name>RL21_METMP</name>
<accession>Q6M125</accession>
<evidence type="ECO:0000255" key="1">
    <source>
        <dbReference type="HAMAP-Rule" id="MF_00369"/>
    </source>
</evidence>
<evidence type="ECO:0000256" key="2">
    <source>
        <dbReference type="SAM" id="MobiDB-lite"/>
    </source>
</evidence>
<evidence type="ECO:0000305" key="3"/>
<protein>
    <recommendedName>
        <fullName evidence="1">Large ribosomal subunit protein eL21</fullName>
    </recommendedName>
    <alternativeName>
        <fullName evidence="3">50S ribosomal protein L21e</fullName>
    </alternativeName>
</protein>
<keyword id="KW-1185">Reference proteome</keyword>
<keyword id="KW-0687">Ribonucleoprotein</keyword>
<keyword id="KW-0689">Ribosomal protein</keyword>
<organism>
    <name type="scientific">Methanococcus maripaludis (strain DSM 14266 / JCM 13030 / NBRC 101832 / S2 / LL)</name>
    <dbReference type="NCBI Taxonomy" id="267377"/>
    <lineage>
        <taxon>Archaea</taxon>
        <taxon>Methanobacteriati</taxon>
        <taxon>Methanobacteriota</taxon>
        <taxon>Methanomada group</taxon>
        <taxon>Methanococci</taxon>
        <taxon>Methanococcales</taxon>
        <taxon>Methanococcaceae</taxon>
        <taxon>Methanococcus</taxon>
    </lineage>
</organism>
<comment type="similarity">
    <text evidence="1">Belongs to the eukaryotic ribosomal protein eL21 family.</text>
</comment>